<name>CARB_METMJ</name>
<organism>
    <name type="scientific">Methanoculleus marisnigri (strain ATCC 35101 / DSM 1498 / JR1)</name>
    <dbReference type="NCBI Taxonomy" id="368407"/>
    <lineage>
        <taxon>Archaea</taxon>
        <taxon>Methanobacteriati</taxon>
        <taxon>Methanobacteriota</taxon>
        <taxon>Stenosarchaea group</taxon>
        <taxon>Methanomicrobia</taxon>
        <taxon>Methanomicrobiales</taxon>
        <taxon>Methanomicrobiaceae</taxon>
        <taxon>Methanoculleus</taxon>
    </lineage>
</organism>
<protein>
    <recommendedName>
        <fullName evidence="1">Carbamoyl phosphate synthase large chain</fullName>
        <ecNumber evidence="1">6.3.4.16</ecNumber>
        <ecNumber evidence="1">6.3.5.5</ecNumber>
    </recommendedName>
    <alternativeName>
        <fullName evidence="1">Carbamoyl phosphate synthetase ammonia chain</fullName>
    </alternativeName>
</protein>
<dbReference type="EC" id="6.3.4.16" evidence="1"/>
<dbReference type="EC" id="6.3.5.5" evidence="1"/>
<dbReference type="EMBL" id="CP000562">
    <property type="protein sequence ID" value="ABN56923.1"/>
    <property type="molecule type" value="Genomic_DNA"/>
</dbReference>
<dbReference type="RefSeq" id="WP_011843834.1">
    <property type="nucleotide sequence ID" value="NC_009051.1"/>
</dbReference>
<dbReference type="SMR" id="A3CU73"/>
<dbReference type="STRING" id="368407.Memar_0990"/>
<dbReference type="GeneID" id="4847278"/>
<dbReference type="GeneID" id="76731562"/>
<dbReference type="KEGG" id="mem:Memar_0990"/>
<dbReference type="eggNOG" id="arCOG01594">
    <property type="taxonomic scope" value="Archaea"/>
</dbReference>
<dbReference type="HOGENOM" id="CLU_000513_1_0_2"/>
<dbReference type="OrthoDB" id="85487at2157"/>
<dbReference type="UniPathway" id="UPA00068">
    <property type="reaction ID" value="UER00171"/>
</dbReference>
<dbReference type="UniPathway" id="UPA00070">
    <property type="reaction ID" value="UER00115"/>
</dbReference>
<dbReference type="Proteomes" id="UP000002146">
    <property type="component" value="Chromosome"/>
</dbReference>
<dbReference type="GO" id="GO:0005737">
    <property type="term" value="C:cytoplasm"/>
    <property type="evidence" value="ECO:0007669"/>
    <property type="project" value="TreeGrafter"/>
</dbReference>
<dbReference type="GO" id="GO:0005524">
    <property type="term" value="F:ATP binding"/>
    <property type="evidence" value="ECO:0007669"/>
    <property type="project" value="UniProtKB-UniRule"/>
</dbReference>
<dbReference type="GO" id="GO:0004087">
    <property type="term" value="F:carbamoyl-phosphate synthase (ammonia) activity"/>
    <property type="evidence" value="ECO:0007669"/>
    <property type="project" value="RHEA"/>
</dbReference>
<dbReference type="GO" id="GO:0004088">
    <property type="term" value="F:carbamoyl-phosphate synthase (glutamine-hydrolyzing) activity"/>
    <property type="evidence" value="ECO:0007669"/>
    <property type="project" value="UniProtKB-UniRule"/>
</dbReference>
<dbReference type="GO" id="GO:0046872">
    <property type="term" value="F:metal ion binding"/>
    <property type="evidence" value="ECO:0007669"/>
    <property type="project" value="UniProtKB-KW"/>
</dbReference>
<dbReference type="GO" id="GO:0044205">
    <property type="term" value="P:'de novo' UMP biosynthetic process"/>
    <property type="evidence" value="ECO:0007669"/>
    <property type="project" value="UniProtKB-UniRule"/>
</dbReference>
<dbReference type="GO" id="GO:0006541">
    <property type="term" value="P:glutamine metabolic process"/>
    <property type="evidence" value="ECO:0007669"/>
    <property type="project" value="TreeGrafter"/>
</dbReference>
<dbReference type="GO" id="GO:0006526">
    <property type="term" value="P:L-arginine biosynthetic process"/>
    <property type="evidence" value="ECO:0007669"/>
    <property type="project" value="UniProtKB-UniRule"/>
</dbReference>
<dbReference type="CDD" id="cd01424">
    <property type="entry name" value="MGS_CPS_II"/>
    <property type="match status" value="1"/>
</dbReference>
<dbReference type="FunFam" id="1.10.1030.10:FF:000002">
    <property type="entry name" value="Carbamoyl-phosphate synthase large chain"/>
    <property type="match status" value="1"/>
</dbReference>
<dbReference type="FunFam" id="3.30.1490.20:FF:000001">
    <property type="entry name" value="Carbamoyl-phosphate synthase large chain"/>
    <property type="match status" value="1"/>
</dbReference>
<dbReference type="FunFam" id="3.30.470.20:FF:000001">
    <property type="entry name" value="Carbamoyl-phosphate synthase large chain"/>
    <property type="match status" value="1"/>
</dbReference>
<dbReference type="FunFam" id="3.30.470.20:FF:000013">
    <property type="entry name" value="Carbamoyl-phosphate synthase large chain"/>
    <property type="match status" value="1"/>
</dbReference>
<dbReference type="FunFam" id="3.40.50.20:FF:000001">
    <property type="entry name" value="Carbamoyl-phosphate synthase large chain"/>
    <property type="match status" value="2"/>
</dbReference>
<dbReference type="Gene3D" id="3.40.50.20">
    <property type="match status" value="2"/>
</dbReference>
<dbReference type="Gene3D" id="3.30.470.20">
    <property type="entry name" value="ATP-grasp fold, B domain"/>
    <property type="match status" value="2"/>
</dbReference>
<dbReference type="Gene3D" id="1.10.1030.10">
    <property type="entry name" value="Carbamoyl-phosphate synthetase, large subunit oligomerisation domain"/>
    <property type="match status" value="1"/>
</dbReference>
<dbReference type="Gene3D" id="3.40.50.1380">
    <property type="entry name" value="Methylglyoxal synthase-like domain"/>
    <property type="match status" value="1"/>
</dbReference>
<dbReference type="HAMAP" id="MF_01210_A">
    <property type="entry name" value="CPSase_L_chain_A"/>
    <property type="match status" value="1"/>
</dbReference>
<dbReference type="HAMAP" id="MF_01210_B">
    <property type="entry name" value="CPSase_L_chain_B"/>
    <property type="match status" value="1"/>
</dbReference>
<dbReference type="InterPro" id="IPR011761">
    <property type="entry name" value="ATP-grasp"/>
</dbReference>
<dbReference type="InterPro" id="IPR006275">
    <property type="entry name" value="CarbamoylP_synth_lsu"/>
</dbReference>
<dbReference type="InterPro" id="IPR005480">
    <property type="entry name" value="CarbamoylP_synth_lsu_oligo"/>
</dbReference>
<dbReference type="InterPro" id="IPR036897">
    <property type="entry name" value="CarbamoylP_synth_lsu_oligo_sf"/>
</dbReference>
<dbReference type="InterPro" id="IPR005479">
    <property type="entry name" value="CbamoylP_synth_lsu-like_ATP-bd"/>
</dbReference>
<dbReference type="InterPro" id="IPR005483">
    <property type="entry name" value="CbamoylP_synth_lsu_CPSase_dom"/>
</dbReference>
<dbReference type="InterPro" id="IPR011607">
    <property type="entry name" value="MGS-like_dom"/>
</dbReference>
<dbReference type="InterPro" id="IPR036914">
    <property type="entry name" value="MGS-like_dom_sf"/>
</dbReference>
<dbReference type="InterPro" id="IPR033937">
    <property type="entry name" value="MGS_CPS_CarB"/>
</dbReference>
<dbReference type="InterPro" id="IPR016185">
    <property type="entry name" value="PreATP-grasp_dom_sf"/>
</dbReference>
<dbReference type="NCBIfam" id="TIGR01369">
    <property type="entry name" value="CPSaseII_lrg"/>
    <property type="match status" value="1"/>
</dbReference>
<dbReference type="NCBIfam" id="NF003671">
    <property type="entry name" value="PRK05294.1"/>
    <property type="match status" value="1"/>
</dbReference>
<dbReference type="NCBIfam" id="NF009455">
    <property type="entry name" value="PRK12815.1"/>
    <property type="match status" value="1"/>
</dbReference>
<dbReference type="PANTHER" id="PTHR11405:SF53">
    <property type="entry name" value="CARBAMOYL-PHOSPHATE SYNTHASE [AMMONIA], MITOCHONDRIAL"/>
    <property type="match status" value="1"/>
</dbReference>
<dbReference type="PANTHER" id="PTHR11405">
    <property type="entry name" value="CARBAMOYLTRANSFERASE FAMILY MEMBER"/>
    <property type="match status" value="1"/>
</dbReference>
<dbReference type="Pfam" id="PF02786">
    <property type="entry name" value="CPSase_L_D2"/>
    <property type="match status" value="2"/>
</dbReference>
<dbReference type="Pfam" id="PF02787">
    <property type="entry name" value="CPSase_L_D3"/>
    <property type="match status" value="1"/>
</dbReference>
<dbReference type="Pfam" id="PF02142">
    <property type="entry name" value="MGS"/>
    <property type="match status" value="1"/>
</dbReference>
<dbReference type="PRINTS" id="PR00098">
    <property type="entry name" value="CPSASE"/>
</dbReference>
<dbReference type="SMART" id="SM01096">
    <property type="entry name" value="CPSase_L_D3"/>
    <property type="match status" value="1"/>
</dbReference>
<dbReference type="SMART" id="SM00851">
    <property type="entry name" value="MGS"/>
    <property type="match status" value="1"/>
</dbReference>
<dbReference type="SUPFAM" id="SSF48108">
    <property type="entry name" value="Carbamoyl phosphate synthetase, large subunit connection domain"/>
    <property type="match status" value="1"/>
</dbReference>
<dbReference type="SUPFAM" id="SSF56059">
    <property type="entry name" value="Glutathione synthetase ATP-binding domain-like"/>
    <property type="match status" value="2"/>
</dbReference>
<dbReference type="SUPFAM" id="SSF52335">
    <property type="entry name" value="Methylglyoxal synthase-like"/>
    <property type="match status" value="1"/>
</dbReference>
<dbReference type="SUPFAM" id="SSF52440">
    <property type="entry name" value="PreATP-grasp domain"/>
    <property type="match status" value="2"/>
</dbReference>
<dbReference type="PROSITE" id="PS50975">
    <property type="entry name" value="ATP_GRASP"/>
    <property type="match status" value="2"/>
</dbReference>
<dbReference type="PROSITE" id="PS00866">
    <property type="entry name" value="CPSASE_1"/>
    <property type="match status" value="1"/>
</dbReference>
<dbReference type="PROSITE" id="PS00867">
    <property type="entry name" value="CPSASE_2"/>
    <property type="match status" value="2"/>
</dbReference>
<dbReference type="PROSITE" id="PS51855">
    <property type="entry name" value="MGS"/>
    <property type="match status" value="1"/>
</dbReference>
<sequence>MPKKSHIKKVLIIGSGPIQIGQAAEFDFSGSQACRALREEGVEVVLVNSNPATIQTDPDTADVIYIEPLKAELIAKIIAKEKPDGILSGMGGQTGLNMTAELAEMGALEGVEILGTPLEAIYRGEDREQFRDLMNAIGEPVPRSMILEHMNQIDEAIREVGLPAIIRPAYTLGGSGGGVAHTPEEMRRICELGLARSRIHQVLVEESVAGWKEIEFEVMRDAADTCIIVCGMENVDPMGIHTGESVVVAPILTLRDDEFQTLRTAAIKIIRALDVQGGCNIQFAYKDGDYRIIEVNPRVSRSSALASKATGYPIARVAAKIAIGLRLDEIMNTVTGVTPASFEPAIDYVVVKVPRWPFDKFKSADRTLTTAMKSTGEVMAIGRTVEEAFKKALRSLDNDMQQHTNPSEIRMILTSPTDERFGCLFDAFREGFTVREIAELTAITPFFLEKIKNIVDLERKLETDFEPEDVRVARRSGFSDEDLLALTKKTAGEIEALGGTPTYKMVDTCAAEFPATTPYFYSTWEEGCELVRDSAKKVLILGSGPIRIGQGIEFDYCTVHAVMALREEEGIEVHIVNNNPETVSTDADTSDRLFFEPMQLEDVMNILKKDDYYGVMVQFGGQNSVNLAVPLEAEIRRLDLPTKILGTSPDAMDAAEDRDRFSRLLTRLEIPSPANSSAYSEEEAREMAGEIGYPVLVRPSYVLGGRAMELVHDEAELESYIKEAVRVSRKHPVLIDSFLQNAVEIDVDAVSDGTDVLIGGIMEHIEWAGVHSGDSACVIPPQSLTPSVIARVRDYTKKIALGLGVVGLINIQYAVRNDVVYVLEANPRASRTVPFVAKATGIALAKIAAKVMVGRKLADMGVAEPEIEHVAVKEVLLPFNKLPGVDTVLGPEMKSTGEVMGIDYDFGRAYYKACTAADNTLPTTGNVFISVTDEQKEELLPVARKLRELGLSLYGTSGTVDFLTQNGVEANLVRKVQEGSPNVIDAMRSGSIRLIINTPADKASRQDHIQIMRAAVDYGIPYITTLQAARAAAMAIDAIKREEITIEPLGHYHGLM</sequence>
<comment type="function">
    <text evidence="1">Large subunit of the glutamine-dependent carbamoyl phosphate synthetase (CPSase). CPSase catalyzes the formation of carbamoyl phosphate from the ammonia moiety of glutamine, carbonate, and phosphate donated by ATP, constituting the first step of 2 biosynthetic pathways, one leading to arginine and/or urea and the other to pyrimidine nucleotides. The large subunit (synthetase) binds the substrates ammonia (free or transferred from glutamine from the small subunit), hydrogencarbonate and ATP and carries out an ATP-coupled ligase reaction, activating hydrogencarbonate by forming carboxy phosphate which reacts with ammonia to form carbamoyl phosphate.</text>
</comment>
<comment type="catalytic activity">
    <reaction evidence="1">
        <text>hydrogencarbonate + L-glutamine + 2 ATP + H2O = carbamoyl phosphate + L-glutamate + 2 ADP + phosphate + 2 H(+)</text>
        <dbReference type="Rhea" id="RHEA:18633"/>
        <dbReference type="ChEBI" id="CHEBI:15377"/>
        <dbReference type="ChEBI" id="CHEBI:15378"/>
        <dbReference type="ChEBI" id="CHEBI:17544"/>
        <dbReference type="ChEBI" id="CHEBI:29985"/>
        <dbReference type="ChEBI" id="CHEBI:30616"/>
        <dbReference type="ChEBI" id="CHEBI:43474"/>
        <dbReference type="ChEBI" id="CHEBI:58228"/>
        <dbReference type="ChEBI" id="CHEBI:58359"/>
        <dbReference type="ChEBI" id="CHEBI:456216"/>
        <dbReference type="EC" id="6.3.5.5"/>
    </reaction>
</comment>
<comment type="catalytic activity">
    <molecule>Carbamoyl phosphate synthase large chain</molecule>
    <reaction evidence="1">
        <text>hydrogencarbonate + NH4(+) + 2 ATP = carbamoyl phosphate + 2 ADP + phosphate + 2 H(+)</text>
        <dbReference type="Rhea" id="RHEA:18029"/>
        <dbReference type="ChEBI" id="CHEBI:15378"/>
        <dbReference type="ChEBI" id="CHEBI:17544"/>
        <dbReference type="ChEBI" id="CHEBI:28938"/>
        <dbReference type="ChEBI" id="CHEBI:30616"/>
        <dbReference type="ChEBI" id="CHEBI:43474"/>
        <dbReference type="ChEBI" id="CHEBI:58228"/>
        <dbReference type="ChEBI" id="CHEBI:456216"/>
        <dbReference type="EC" id="6.3.4.16"/>
    </reaction>
</comment>
<comment type="cofactor">
    <cofactor evidence="1">
        <name>Mg(2+)</name>
        <dbReference type="ChEBI" id="CHEBI:18420"/>
    </cofactor>
    <cofactor evidence="1">
        <name>Mn(2+)</name>
        <dbReference type="ChEBI" id="CHEBI:29035"/>
    </cofactor>
    <text evidence="1">Binds 4 Mg(2+) or Mn(2+) ions per subunit.</text>
</comment>
<comment type="pathway">
    <text evidence="1">Amino-acid biosynthesis; L-arginine biosynthesis; carbamoyl phosphate from bicarbonate: step 1/1.</text>
</comment>
<comment type="pathway">
    <text evidence="1">Pyrimidine metabolism; UMP biosynthesis via de novo pathway; (S)-dihydroorotate from bicarbonate: step 1/3.</text>
</comment>
<comment type="subunit">
    <text evidence="1">Composed of two chains; the small (or glutamine) chain promotes the hydrolysis of glutamine to ammonia, which is used by the large (or ammonia) chain to synthesize carbamoyl phosphate. Tetramer of heterodimers (alpha,beta)4.</text>
</comment>
<comment type="domain">
    <text evidence="1">The large subunit is composed of 2 ATP-grasp domains that are involved in binding the 2 ATP molecules needed for carbamoyl phosphate synthesis. The N-terminal ATP-grasp domain (referred to as the carboxyphosphate synthetic component) catalyzes the ATP-dependent phosphorylation of hydrogencarbonate to carboxyphosphate and the subsequent nucleophilic attack by ammonia to form a carbamate intermediate. The C-terminal ATP-grasp domain (referred to as the carbamoyl phosphate synthetic component) then catalyzes the phosphorylation of carbamate with the second ATP to form the end product carbamoyl phosphate. The reactive and unstable enzyme intermediates are sequentially channeled from one active site to the next through the interior of the protein over a distance of at least 96 A.</text>
</comment>
<comment type="similarity">
    <text evidence="1">Belongs to the CarB family.</text>
</comment>
<accession>A3CU73</accession>
<proteinExistence type="inferred from homology"/>
<keyword id="KW-0028">Amino-acid biosynthesis</keyword>
<keyword id="KW-0055">Arginine biosynthesis</keyword>
<keyword id="KW-0067">ATP-binding</keyword>
<keyword id="KW-0436">Ligase</keyword>
<keyword id="KW-0460">Magnesium</keyword>
<keyword id="KW-0464">Manganese</keyword>
<keyword id="KW-0479">Metal-binding</keyword>
<keyword id="KW-0547">Nucleotide-binding</keyword>
<keyword id="KW-0665">Pyrimidine biosynthesis</keyword>
<keyword id="KW-0677">Repeat</keyword>
<feature type="chain" id="PRO_1000066366" description="Carbamoyl phosphate synthase large chain">
    <location>
        <begin position="1"/>
        <end position="1056"/>
    </location>
</feature>
<feature type="domain" description="ATP-grasp 1" evidence="1">
    <location>
        <begin position="131"/>
        <end position="323"/>
    </location>
</feature>
<feature type="domain" description="ATP-grasp 2" evidence="1">
    <location>
        <begin position="662"/>
        <end position="853"/>
    </location>
</feature>
<feature type="domain" description="MGS-like" evidence="1">
    <location>
        <begin position="919"/>
        <end position="1056"/>
    </location>
</feature>
<feature type="region of interest" description="Carboxyphosphate synthetic domain" evidence="1">
    <location>
        <begin position="1"/>
        <end position="397"/>
    </location>
</feature>
<feature type="region of interest" description="Oligomerization domain" evidence="1">
    <location>
        <begin position="398"/>
        <end position="530"/>
    </location>
</feature>
<feature type="region of interest" description="Carbamoyl phosphate synthetic domain" evidence="1">
    <location>
        <begin position="531"/>
        <end position="920"/>
    </location>
</feature>
<feature type="region of interest" description="Allosteric domain" evidence="1">
    <location>
        <begin position="921"/>
        <end position="1056"/>
    </location>
</feature>
<feature type="binding site" evidence="1">
    <location>
        <position position="127"/>
    </location>
    <ligand>
        <name>ATP</name>
        <dbReference type="ChEBI" id="CHEBI:30616"/>
        <label>1</label>
    </ligand>
</feature>
<feature type="binding site" evidence="1">
    <location>
        <position position="167"/>
    </location>
    <ligand>
        <name>ATP</name>
        <dbReference type="ChEBI" id="CHEBI:30616"/>
        <label>1</label>
    </ligand>
</feature>
<feature type="binding site" evidence="1">
    <location>
        <position position="173"/>
    </location>
    <ligand>
        <name>ATP</name>
        <dbReference type="ChEBI" id="CHEBI:30616"/>
        <label>1</label>
    </ligand>
</feature>
<feature type="binding site" evidence="1">
    <location>
        <position position="174"/>
    </location>
    <ligand>
        <name>ATP</name>
        <dbReference type="ChEBI" id="CHEBI:30616"/>
        <label>1</label>
    </ligand>
</feature>
<feature type="binding site" evidence="1">
    <location>
        <position position="206"/>
    </location>
    <ligand>
        <name>ATP</name>
        <dbReference type="ChEBI" id="CHEBI:30616"/>
        <label>1</label>
    </ligand>
</feature>
<feature type="binding site" evidence="1">
    <location>
        <position position="208"/>
    </location>
    <ligand>
        <name>ATP</name>
        <dbReference type="ChEBI" id="CHEBI:30616"/>
        <label>1</label>
    </ligand>
</feature>
<feature type="binding site" evidence="1">
    <location>
        <position position="213"/>
    </location>
    <ligand>
        <name>ATP</name>
        <dbReference type="ChEBI" id="CHEBI:30616"/>
        <label>1</label>
    </ligand>
</feature>
<feature type="binding site" evidence="1">
    <location>
        <position position="239"/>
    </location>
    <ligand>
        <name>ATP</name>
        <dbReference type="ChEBI" id="CHEBI:30616"/>
        <label>1</label>
    </ligand>
</feature>
<feature type="binding site" evidence="1">
    <location>
        <position position="240"/>
    </location>
    <ligand>
        <name>ATP</name>
        <dbReference type="ChEBI" id="CHEBI:30616"/>
        <label>1</label>
    </ligand>
</feature>
<feature type="binding site" evidence="1">
    <location>
        <position position="241"/>
    </location>
    <ligand>
        <name>ATP</name>
        <dbReference type="ChEBI" id="CHEBI:30616"/>
        <label>1</label>
    </ligand>
</feature>
<feature type="binding site" evidence="1">
    <location>
        <position position="282"/>
    </location>
    <ligand>
        <name>ATP</name>
        <dbReference type="ChEBI" id="CHEBI:30616"/>
        <label>1</label>
    </ligand>
</feature>
<feature type="binding site" evidence="1">
    <location>
        <position position="282"/>
    </location>
    <ligand>
        <name>Mg(2+)</name>
        <dbReference type="ChEBI" id="CHEBI:18420"/>
        <label>1</label>
    </ligand>
</feature>
<feature type="binding site" evidence="1">
    <location>
        <position position="282"/>
    </location>
    <ligand>
        <name>Mn(2+)</name>
        <dbReference type="ChEBI" id="CHEBI:29035"/>
        <label>1</label>
    </ligand>
</feature>
<feature type="binding site" evidence="1">
    <location>
        <position position="294"/>
    </location>
    <ligand>
        <name>ATP</name>
        <dbReference type="ChEBI" id="CHEBI:30616"/>
        <label>1</label>
    </ligand>
</feature>
<feature type="binding site" evidence="1">
    <location>
        <position position="294"/>
    </location>
    <ligand>
        <name>Mg(2+)</name>
        <dbReference type="ChEBI" id="CHEBI:18420"/>
        <label>1</label>
    </ligand>
</feature>
<feature type="binding site" evidence="1">
    <location>
        <position position="294"/>
    </location>
    <ligand>
        <name>Mg(2+)</name>
        <dbReference type="ChEBI" id="CHEBI:18420"/>
        <label>2</label>
    </ligand>
</feature>
<feature type="binding site" evidence="1">
    <location>
        <position position="294"/>
    </location>
    <ligand>
        <name>Mn(2+)</name>
        <dbReference type="ChEBI" id="CHEBI:29035"/>
        <label>1</label>
    </ligand>
</feature>
<feature type="binding site" evidence="1">
    <location>
        <position position="294"/>
    </location>
    <ligand>
        <name>Mn(2+)</name>
        <dbReference type="ChEBI" id="CHEBI:29035"/>
        <label>2</label>
    </ligand>
</feature>
<feature type="binding site" evidence="1">
    <location>
        <position position="296"/>
    </location>
    <ligand>
        <name>Mg(2+)</name>
        <dbReference type="ChEBI" id="CHEBI:18420"/>
        <label>2</label>
    </ligand>
</feature>
<feature type="binding site" evidence="1">
    <location>
        <position position="296"/>
    </location>
    <ligand>
        <name>Mn(2+)</name>
        <dbReference type="ChEBI" id="CHEBI:29035"/>
        <label>2</label>
    </ligand>
</feature>
<feature type="binding site" evidence="1">
    <location>
        <position position="698"/>
    </location>
    <ligand>
        <name>ATP</name>
        <dbReference type="ChEBI" id="CHEBI:30616"/>
        <label>2</label>
    </ligand>
</feature>
<feature type="binding site" evidence="1">
    <location>
        <position position="737"/>
    </location>
    <ligand>
        <name>ATP</name>
        <dbReference type="ChEBI" id="CHEBI:30616"/>
        <label>2</label>
    </ligand>
</feature>
<feature type="binding site" evidence="1">
    <location>
        <position position="739"/>
    </location>
    <ligand>
        <name>ATP</name>
        <dbReference type="ChEBI" id="CHEBI:30616"/>
        <label>2</label>
    </ligand>
</feature>
<feature type="binding site" evidence="1">
    <location>
        <position position="744"/>
    </location>
    <ligand>
        <name>ATP</name>
        <dbReference type="ChEBI" id="CHEBI:30616"/>
        <label>2</label>
    </ligand>
</feature>
<feature type="binding site" evidence="1">
    <location>
        <position position="769"/>
    </location>
    <ligand>
        <name>ATP</name>
        <dbReference type="ChEBI" id="CHEBI:30616"/>
        <label>2</label>
    </ligand>
</feature>
<feature type="binding site" evidence="1">
    <location>
        <position position="770"/>
    </location>
    <ligand>
        <name>ATP</name>
        <dbReference type="ChEBI" id="CHEBI:30616"/>
        <label>2</label>
    </ligand>
</feature>
<feature type="binding site" evidence="1">
    <location>
        <position position="771"/>
    </location>
    <ligand>
        <name>ATP</name>
        <dbReference type="ChEBI" id="CHEBI:30616"/>
        <label>2</label>
    </ligand>
</feature>
<feature type="binding site" evidence="1">
    <location>
        <position position="772"/>
    </location>
    <ligand>
        <name>ATP</name>
        <dbReference type="ChEBI" id="CHEBI:30616"/>
        <label>2</label>
    </ligand>
</feature>
<feature type="binding site" evidence="1">
    <location>
        <position position="812"/>
    </location>
    <ligand>
        <name>ATP</name>
        <dbReference type="ChEBI" id="CHEBI:30616"/>
        <label>2</label>
    </ligand>
</feature>
<feature type="binding site" evidence="1">
    <location>
        <position position="812"/>
    </location>
    <ligand>
        <name>Mg(2+)</name>
        <dbReference type="ChEBI" id="CHEBI:18420"/>
        <label>3</label>
    </ligand>
</feature>
<feature type="binding site" evidence="1">
    <location>
        <position position="812"/>
    </location>
    <ligand>
        <name>Mn(2+)</name>
        <dbReference type="ChEBI" id="CHEBI:29035"/>
        <label>3</label>
    </ligand>
</feature>
<feature type="binding site" evidence="1">
    <location>
        <position position="824"/>
    </location>
    <ligand>
        <name>ATP</name>
        <dbReference type="ChEBI" id="CHEBI:30616"/>
        <label>2</label>
    </ligand>
</feature>
<feature type="binding site" evidence="1">
    <location>
        <position position="824"/>
    </location>
    <ligand>
        <name>Mg(2+)</name>
        <dbReference type="ChEBI" id="CHEBI:18420"/>
        <label>3</label>
    </ligand>
</feature>
<feature type="binding site" evidence="1">
    <location>
        <position position="824"/>
    </location>
    <ligand>
        <name>Mg(2+)</name>
        <dbReference type="ChEBI" id="CHEBI:18420"/>
        <label>4</label>
    </ligand>
</feature>
<feature type="binding site" evidence="1">
    <location>
        <position position="824"/>
    </location>
    <ligand>
        <name>Mn(2+)</name>
        <dbReference type="ChEBI" id="CHEBI:29035"/>
        <label>3</label>
    </ligand>
</feature>
<feature type="binding site" evidence="1">
    <location>
        <position position="824"/>
    </location>
    <ligand>
        <name>Mn(2+)</name>
        <dbReference type="ChEBI" id="CHEBI:29035"/>
        <label>4</label>
    </ligand>
</feature>
<feature type="binding site" evidence="1">
    <location>
        <position position="826"/>
    </location>
    <ligand>
        <name>Mg(2+)</name>
        <dbReference type="ChEBI" id="CHEBI:18420"/>
        <label>4</label>
    </ligand>
</feature>
<feature type="binding site" evidence="1">
    <location>
        <position position="826"/>
    </location>
    <ligand>
        <name>Mn(2+)</name>
        <dbReference type="ChEBI" id="CHEBI:29035"/>
        <label>4</label>
    </ligand>
</feature>
<reference key="1">
    <citation type="journal article" date="2009" name="Stand. Genomic Sci.">
        <title>Complete genome sequence of Methanoculleus marisnigri Romesser et al. 1981 type strain JR1.</title>
        <authorList>
            <person name="Anderson I.J."/>
            <person name="Sieprawska-Lupa M."/>
            <person name="Lapidus A."/>
            <person name="Nolan M."/>
            <person name="Copeland A."/>
            <person name="Glavina Del Rio T."/>
            <person name="Tice H."/>
            <person name="Dalin E."/>
            <person name="Barry K."/>
            <person name="Saunders E."/>
            <person name="Han C."/>
            <person name="Brettin T."/>
            <person name="Detter J.C."/>
            <person name="Bruce D."/>
            <person name="Mikhailova N."/>
            <person name="Pitluck S."/>
            <person name="Hauser L."/>
            <person name="Land M."/>
            <person name="Lucas S."/>
            <person name="Richardson P."/>
            <person name="Whitman W.B."/>
            <person name="Kyrpides N.C."/>
        </authorList>
    </citation>
    <scope>NUCLEOTIDE SEQUENCE [LARGE SCALE GENOMIC DNA]</scope>
    <source>
        <strain>ATCC 35101 / DSM 1498 / JR1</strain>
    </source>
</reference>
<gene>
    <name evidence="1" type="primary">carB</name>
    <name type="ordered locus">Memar_0990</name>
</gene>
<evidence type="ECO:0000255" key="1">
    <source>
        <dbReference type="HAMAP-Rule" id="MF_01210"/>
    </source>
</evidence>